<name>BJSB1_TRINI</name>
<sequence length="748" mass="88234">MRVLVLVASLGLRGSVVKDDTTVVIGKDNMVTMDIKMKELCILKLLNHILQPTMYDDIREVAREWVIEENMDKYLKTDVVKKFIDTFKMGMLPRGEVFVHTNELHLEQAVKVFKIMYSAKDFDVFIRTACWLRERINGGMFVYALTACVFHRTDCRGITLPAPYEIYPYVFVDSHIINKAFMMKMTKAARDPVMLDYYGIKVTDKNLVVIDWRKGVRRTLTEHDRISYFTEDIDLNTYMYYLHMSYPFWMTDDMYTVNKERRGEIMGTYTQLLARLRLERLSHEMCDIKSIMWNEPLKTGYWPKIRLHTGDEMPVRSNNKIIVTKENVKVKRMLDDVERMLRDGILTGKIERRDGTIINLKKAEDVEHLARLLLGGMGLVGDDAKFMHMMHLMKRLLSYNVYNFDKYTYVPTALDLYSTCLRDPVFWRLMKRVTDTFFLFKKMLPKYTREDFDFPGVKIEKFTTDKLTTFIDEYDMDITNAMFLDDVEMKKKRSDMTMVARMARLNHHPFKVTVDVTSDKTVDCVVRIFIGPKYDCLGRLMSVNDKRMDMIEMDTFLYKLETGKNTIVRNSLEMHGVIEQRPWTRRILNNMIGTVGTISKTVDVESWWYKRHRLPHRMLLPLGRRGGMPMQMFVIVTPVKTNLLLPNLDMNIMKERKTCAGASVSTRCRSGFPFDRKIDMTHFFTRNMKFTDVMIFRKDLSLSNTIKDVDMSDMMMKKDDLTYLDSDMLVRWSYKAVMMMSKDDMMRM</sequence>
<evidence type="ECO:0000255" key="1"/>
<evidence type="ECO:0000305" key="2"/>
<dbReference type="EMBL" id="L03280">
    <property type="protein sequence ID" value="AAA27882.1"/>
    <property type="molecule type" value="mRNA"/>
</dbReference>
<dbReference type="PIR" id="B45046">
    <property type="entry name" value="B45046"/>
</dbReference>
<dbReference type="SMR" id="Q06342"/>
<dbReference type="FunCoup" id="Q06342">
    <property type="interactions" value="8"/>
</dbReference>
<dbReference type="InParanoid" id="Q06342"/>
<dbReference type="Proteomes" id="UP000322000">
    <property type="component" value="Unplaced"/>
</dbReference>
<dbReference type="GO" id="GO:0045735">
    <property type="term" value="F:nutrient reservoir activity"/>
    <property type="evidence" value="ECO:0007669"/>
    <property type="project" value="UniProtKB-KW"/>
</dbReference>
<dbReference type="Gene3D" id="1.10.1280.10">
    <property type="entry name" value="Di-copper center containing domain from catechol oxidase"/>
    <property type="match status" value="1"/>
</dbReference>
<dbReference type="Gene3D" id="2.60.40.1520">
    <property type="entry name" value="Hemocyanin, C-terminal domain"/>
    <property type="match status" value="1"/>
</dbReference>
<dbReference type="Gene3D" id="1.20.1370.10">
    <property type="entry name" value="Hemocyanin, N-terminal domain"/>
    <property type="match status" value="1"/>
</dbReference>
<dbReference type="InterPro" id="IPR008922">
    <property type="entry name" value="Di-copper_centre_dom_sf"/>
</dbReference>
<dbReference type="InterPro" id="IPR013788">
    <property type="entry name" value="Hemocyanin/hexamerin"/>
</dbReference>
<dbReference type="InterPro" id="IPR000896">
    <property type="entry name" value="Hemocyanin/hexamerin_mid_dom"/>
</dbReference>
<dbReference type="InterPro" id="IPR005203">
    <property type="entry name" value="Hemocyanin_C"/>
</dbReference>
<dbReference type="InterPro" id="IPR037020">
    <property type="entry name" value="Hemocyanin_C_sf"/>
</dbReference>
<dbReference type="InterPro" id="IPR005204">
    <property type="entry name" value="Hemocyanin_N"/>
</dbReference>
<dbReference type="InterPro" id="IPR036697">
    <property type="entry name" value="Hemocyanin_N_sf"/>
</dbReference>
<dbReference type="InterPro" id="IPR014756">
    <property type="entry name" value="Ig_E-set"/>
</dbReference>
<dbReference type="PANTHER" id="PTHR11511:SF5">
    <property type="entry name" value="FAT-BODY PROTEIN 1-RELATED"/>
    <property type="match status" value="1"/>
</dbReference>
<dbReference type="PANTHER" id="PTHR11511">
    <property type="entry name" value="LARVAL STORAGE PROTEIN/PHENOLOXIDASE"/>
    <property type="match status" value="1"/>
</dbReference>
<dbReference type="Pfam" id="PF03723">
    <property type="entry name" value="Hemocyanin_C"/>
    <property type="match status" value="1"/>
</dbReference>
<dbReference type="Pfam" id="PF00372">
    <property type="entry name" value="Hemocyanin_M"/>
    <property type="match status" value="1"/>
</dbReference>
<dbReference type="Pfam" id="PF03722">
    <property type="entry name" value="Hemocyanin_N"/>
    <property type="match status" value="1"/>
</dbReference>
<dbReference type="PRINTS" id="PR00187">
    <property type="entry name" value="HAEMOCYANIN"/>
</dbReference>
<dbReference type="SUPFAM" id="SSF48056">
    <property type="entry name" value="Di-copper centre-containing domain"/>
    <property type="match status" value="1"/>
</dbReference>
<dbReference type="SUPFAM" id="SSF81296">
    <property type="entry name" value="E set domains"/>
    <property type="match status" value="1"/>
</dbReference>
<dbReference type="SUPFAM" id="SSF48050">
    <property type="entry name" value="Hemocyanin, N-terminal domain"/>
    <property type="match status" value="1"/>
</dbReference>
<dbReference type="PROSITE" id="PS00209">
    <property type="entry name" value="HEMOCYANIN_1"/>
    <property type="match status" value="1"/>
</dbReference>
<dbReference type="PROSITE" id="PS00210">
    <property type="entry name" value="HEMOCYANIN_2"/>
    <property type="match status" value="1"/>
</dbReference>
<reference key="1">
    <citation type="journal article" date="1993" name="J. Biol. Chem.">
        <title>Hormonal regulation and properties of a new group of basic hemolymph proteins expressed during insect metamorphosis.</title>
        <authorList>
            <person name="Jones G."/>
            <person name="Manczak M."/>
            <person name="Horn M."/>
        </authorList>
    </citation>
    <scope>NUCLEOTIDE SEQUENCE [MRNA]</scope>
    <scope>PROTEIN SEQUENCE OF 18-25</scope>
</reference>
<feature type="signal peptide" evidence="1">
    <location>
        <begin position="1"/>
        <end position="17"/>
    </location>
</feature>
<feature type="chain" id="PRO_0000013343" description="Basic juvenile hormone-suppressible protein 1">
    <location>
        <begin position="18"/>
        <end position="748"/>
    </location>
</feature>
<organism>
    <name type="scientific">Trichoplusia ni</name>
    <name type="common">Cabbage looper</name>
    <dbReference type="NCBI Taxonomy" id="7111"/>
    <lineage>
        <taxon>Eukaryota</taxon>
        <taxon>Metazoa</taxon>
        <taxon>Ecdysozoa</taxon>
        <taxon>Arthropoda</taxon>
        <taxon>Hexapoda</taxon>
        <taxon>Insecta</taxon>
        <taxon>Pterygota</taxon>
        <taxon>Neoptera</taxon>
        <taxon>Endopterygota</taxon>
        <taxon>Lepidoptera</taxon>
        <taxon>Glossata</taxon>
        <taxon>Ditrysia</taxon>
        <taxon>Noctuoidea</taxon>
        <taxon>Noctuidae</taxon>
        <taxon>Plusiinae</taxon>
        <taxon>Trichoplusia</taxon>
    </lineage>
</organism>
<comment type="tissue specificity">
    <text>Fat body, and hemolymph of larvae.</text>
</comment>
<comment type="developmental stage">
    <text>Appears in increasing abundance on days 2 and 3 of the final metamorphic larval stadium and then declines to a very low level during day 4 prepupal stage.</text>
</comment>
<comment type="induction">
    <text>Suppressed by juvenile hormone.</text>
</comment>
<comment type="similarity">
    <text evidence="2">Belongs to the hemocyanin family.</text>
</comment>
<keyword id="KW-0903">Direct protein sequencing</keyword>
<keyword id="KW-1185">Reference proteome</keyword>
<keyword id="KW-0732">Signal</keyword>
<keyword id="KW-0758">Storage protein</keyword>
<accession>Q06342</accession>
<gene>
    <name type="primary">BJSP-1</name>
</gene>
<protein>
    <recommendedName>
        <fullName>Basic juvenile hormone-suppressible protein 1</fullName>
        <shortName>BJHSP1</shortName>
    </recommendedName>
</protein>
<proteinExistence type="evidence at protein level"/>